<sequence>MNQHQVMALAAMCQVAKQVQKVAQYGNNNEHDLEILLSSIIQTSPASPEDVYQGTDNLRDGYKTLLAQLSAGAQKDVEIVKYVGGLMQLERALSANDKSLNELGKRIDDIHRRLDHFAITDESVVAGLADIYSTVLSPLGHRIQVYGKPELLKQQLTQNKIRALLLAGIRSAVLWRQMGGKRRHFFFAKRKIIAIAKAKI</sequence>
<reference key="1">
    <citation type="journal article" date="2005" name="Genome Res.">
        <title>Coping with cold: the genome of the versatile marine Antarctica bacterium Pseudoalteromonas haloplanktis TAC125.</title>
        <authorList>
            <person name="Medigue C."/>
            <person name="Krin E."/>
            <person name="Pascal G."/>
            <person name="Barbe V."/>
            <person name="Bernsel A."/>
            <person name="Bertin P.N."/>
            <person name="Cheung F."/>
            <person name="Cruveiller S."/>
            <person name="D'Amico S."/>
            <person name="Duilio A."/>
            <person name="Fang G."/>
            <person name="Feller G."/>
            <person name="Ho C."/>
            <person name="Mangenot S."/>
            <person name="Marino G."/>
            <person name="Nilsson J."/>
            <person name="Parrilli E."/>
            <person name="Rocha E.P.C."/>
            <person name="Rouy Z."/>
            <person name="Sekowska A."/>
            <person name="Tutino M.L."/>
            <person name="Vallenet D."/>
            <person name="von Heijne G."/>
            <person name="Danchin A."/>
        </authorList>
    </citation>
    <scope>NUCLEOTIDE SEQUENCE [LARGE SCALE GENOMIC DNA]</scope>
    <source>
        <strain>TAC 125</strain>
    </source>
</reference>
<feature type="chain" id="PRO_0000390643" description="High frequency lysogenization protein HflD homolog">
    <location>
        <begin position="1"/>
        <end position="200"/>
    </location>
</feature>
<protein>
    <recommendedName>
        <fullName evidence="1">High frequency lysogenization protein HflD homolog</fullName>
    </recommendedName>
</protein>
<proteinExistence type="inferred from homology"/>
<dbReference type="EMBL" id="CR954246">
    <property type="protein sequence ID" value="CAI86764.1"/>
    <property type="molecule type" value="Genomic_DNA"/>
</dbReference>
<dbReference type="SMR" id="Q3IH15"/>
<dbReference type="STRING" id="326442.PSHAa1691"/>
<dbReference type="KEGG" id="pha:PSHAa1691"/>
<dbReference type="PATRIC" id="fig|326442.8.peg.1636"/>
<dbReference type="eggNOG" id="COG2915">
    <property type="taxonomic scope" value="Bacteria"/>
</dbReference>
<dbReference type="HOGENOM" id="CLU_098920_0_0_6"/>
<dbReference type="BioCyc" id="PHAL326442:PSHA_RS08295-MONOMER"/>
<dbReference type="Proteomes" id="UP000006843">
    <property type="component" value="Chromosome I"/>
</dbReference>
<dbReference type="GO" id="GO:0005737">
    <property type="term" value="C:cytoplasm"/>
    <property type="evidence" value="ECO:0007669"/>
    <property type="project" value="UniProtKB-SubCell"/>
</dbReference>
<dbReference type="GO" id="GO:0005886">
    <property type="term" value="C:plasma membrane"/>
    <property type="evidence" value="ECO:0007669"/>
    <property type="project" value="UniProtKB-SubCell"/>
</dbReference>
<dbReference type="Gene3D" id="1.10.3890.10">
    <property type="entry name" value="HflD-like"/>
    <property type="match status" value="1"/>
</dbReference>
<dbReference type="HAMAP" id="MF_00695">
    <property type="entry name" value="HflD_protein"/>
    <property type="match status" value="1"/>
</dbReference>
<dbReference type="InterPro" id="IPR007451">
    <property type="entry name" value="HflD"/>
</dbReference>
<dbReference type="InterPro" id="IPR035932">
    <property type="entry name" value="HflD-like_sf"/>
</dbReference>
<dbReference type="NCBIfam" id="NF001246">
    <property type="entry name" value="PRK00218.1-2"/>
    <property type="match status" value="1"/>
</dbReference>
<dbReference type="PANTHER" id="PTHR38100">
    <property type="entry name" value="HIGH FREQUENCY LYSOGENIZATION PROTEIN HFLD"/>
    <property type="match status" value="1"/>
</dbReference>
<dbReference type="PANTHER" id="PTHR38100:SF1">
    <property type="entry name" value="HIGH FREQUENCY LYSOGENIZATION PROTEIN HFLD"/>
    <property type="match status" value="1"/>
</dbReference>
<dbReference type="Pfam" id="PF04356">
    <property type="entry name" value="DUF489"/>
    <property type="match status" value="1"/>
</dbReference>
<dbReference type="SUPFAM" id="SSF101322">
    <property type="entry name" value="YcfC-like"/>
    <property type="match status" value="1"/>
</dbReference>
<keyword id="KW-0997">Cell inner membrane</keyword>
<keyword id="KW-1003">Cell membrane</keyword>
<keyword id="KW-0963">Cytoplasm</keyword>
<keyword id="KW-0472">Membrane</keyword>
<keyword id="KW-1185">Reference proteome</keyword>
<evidence type="ECO:0000255" key="1">
    <source>
        <dbReference type="HAMAP-Rule" id="MF_00695"/>
    </source>
</evidence>
<accession>Q3IH15</accession>
<name>HFLD_PSET1</name>
<gene>
    <name evidence="1" type="primary">hflD</name>
    <name type="ordered locus">PSHAa1691</name>
</gene>
<organism>
    <name type="scientific">Pseudoalteromonas translucida (strain TAC 125)</name>
    <dbReference type="NCBI Taxonomy" id="326442"/>
    <lineage>
        <taxon>Bacteria</taxon>
        <taxon>Pseudomonadati</taxon>
        <taxon>Pseudomonadota</taxon>
        <taxon>Gammaproteobacteria</taxon>
        <taxon>Alteromonadales</taxon>
        <taxon>Pseudoalteromonadaceae</taxon>
        <taxon>Pseudoalteromonas</taxon>
    </lineage>
</organism>
<comment type="subcellular location">
    <subcellularLocation>
        <location>Cytoplasm</location>
    </subcellularLocation>
    <subcellularLocation>
        <location evidence="1">Cell inner membrane</location>
        <topology evidence="1">Peripheral membrane protein</topology>
        <orientation evidence="1">Cytoplasmic side</orientation>
    </subcellularLocation>
</comment>
<comment type="similarity">
    <text evidence="1">Belongs to the HflD family.</text>
</comment>